<protein>
    <recommendedName>
        <fullName evidence="1">Large ribosomal subunit protein uL24</fullName>
    </recommendedName>
    <alternativeName>
        <fullName evidence="2">50S ribosomal protein L24</fullName>
    </alternativeName>
</protein>
<keyword id="KW-0687">Ribonucleoprotein</keyword>
<keyword id="KW-0689">Ribosomal protein</keyword>
<keyword id="KW-0694">RNA-binding</keyword>
<keyword id="KW-0699">rRNA-binding</keyword>
<proteinExistence type="inferred from homology"/>
<feature type="chain" id="PRO_1000165961" description="Large ribosomal subunit protein uL24">
    <location>
        <begin position="1"/>
        <end position="104"/>
    </location>
</feature>
<name>RL24_SALPC</name>
<accession>C0Q0A5</accession>
<reference key="1">
    <citation type="journal article" date="2009" name="PLoS ONE">
        <title>Salmonella paratyphi C: genetic divergence from Salmonella choleraesuis and pathogenic convergence with Salmonella typhi.</title>
        <authorList>
            <person name="Liu W.-Q."/>
            <person name="Feng Y."/>
            <person name="Wang Y."/>
            <person name="Zou Q.-H."/>
            <person name="Chen F."/>
            <person name="Guo J.-T."/>
            <person name="Peng Y.-H."/>
            <person name="Jin Y."/>
            <person name="Li Y.-G."/>
            <person name="Hu S.-N."/>
            <person name="Johnston R.N."/>
            <person name="Liu G.-R."/>
            <person name="Liu S.-L."/>
        </authorList>
    </citation>
    <scope>NUCLEOTIDE SEQUENCE [LARGE SCALE GENOMIC DNA]</scope>
    <source>
        <strain>RKS4594</strain>
    </source>
</reference>
<gene>
    <name evidence="1" type="primary">rplX</name>
    <name type="ordered locus">SPC_3498</name>
</gene>
<organism>
    <name type="scientific">Salmonella paratyphi C (strain RKS4594)</name>
    <dbReference type="NCBI Taxonomy" id="476213"/>
    <lineage>
        <taxon>Bacteria</taxon>
        <taxon>Pseudomonadati</taxon>
        <taxon>Pseudomonadota</taxon>
        <taxon>Gammaproteobacteria</taxon>
        <taxon>Enterobacterales</taxon>
        <taxon>Enterobacteriaceae</taxon>
        <taxon>Salmonella</taxon>
    </lineage>
</organism>
<comment type="function">
    <text evidence="1">One of two assembly initiator proteins, it binds directly to the 5'-end of the 23S rRNA, where it nucleates assembly of the 50S subunit.</text>
</comment>
<comment type="function">
    <text evidence="1">One of the proteins that surrounds the polypeptide exit tunnel on the outside of the subunit.</text>
</comment>
<comment type="subunit">
    <text evidence="1">Part of the 50S ribosomal subunit.</text>
</comment>
<comment type="similarity">
    <text evidence="1">Belongs to the universal ribosomal protein uL24 family.</text>
</comment>
<sequence length="104" mass="11316">MAAKIRRDDEVIVLTGKDKGKRGKVKNVLSSGKVIVEGINLVKKHQKPVPALNQPGGIVEKEAAIQVSNVAIFNAATGKADRVGFRFEDGKKVRFFKSNSETIK</sequence>
<evidence type="ECO:0000255" key="1">
    <source>
        <dbReference type="HAMAP-Rule" id="MF_01326"/>
    </source>
</evidence>
<evidence type="ECO:0000305" key="2"/>
<dbReference type="EMBL" id="CP000857">
    <property type="protein sequence ID" value="ACN47582.1"/>
    <property type="molecule type" value="Genomic_DNA"/>
</dbReference>
<dbReference type="RefSeq" id="WP_000729185.1">
    <property type="nucleotide sequence ID" value="NC_012125.1"/>
</dbReference>
<dbReference type="SMR" id="C0Q0A5"/>
<dbReference type="GeneID" id="93778678"/>
<dbReference type="KEGG" id="sei:SPC_3498"/>
<dbReference type="HOGENOM" id="CLU_093315_2_2_6"/>
<dbReference type="Proteomes" id="UP000001599">
    <property type="component" value="Chromosome"/>
</dbReference>
<dbReference type="GO" id="GO:0005829">
    <property type="term" value="C:cytosol"/>
    <property type="evidence" value="ECO:0007669"/>
    <property type="project" value="UniProtKB-ARBA"/>
</dbReference>
<dbReference type="GO" id="GO:1990904">
    <property type="term" value="C:ribonucleoprotein complex"/>
    <property type="evidence" value="ECO:0007669"/>
    <property type="project" value="UniProtKB-KW"/>
</dbReference>
<dbReference type="GO" id="GO:0005840">
    <property type="term" value="C:ribosome"/>
    <property type="evidence" value="ECO:0007669"/>
    <property type="project" value="UniProtKB-KW"/>
</dbReference>
<dbReference type="GO" id="GO:0019843">
    <property type="term" value="F:rRNA binding"/>
    <property type="evidence" value="ECO:0007669"/>
    <property type="project" value="UniProtKB-UniRule"/>
</dbReference>
<dbReference type="GO" id="GO:0003735">
    <property type="term" value="F:structural constituent of ribosome"/>
    <property type="evidence" value="ECO:0007669"/>
    <property type="project" value="InterPro"/>
</dbReference>
<dbReference type="GO" id="GO:0006412">
    <property type="term" value="P:translation"/>
    <property type="evidence" value="ECO:0007669"/>
    <property type="project" value="UniProtKB-UniRule"/>
</dbReference>
<dbReference type="CDD" id="cd06089">
    <property type="entry name" value="KOW_RPL26"/>
    <property type="match status" value="1"/>
</dbReference>
<dbReference type="FunFam" id="2.30.30.30:FF:000004">
    <property type="entry name" value="50S ribosomal protein L24"/>
    <property type="match status" value="1"/>
</dbReference>
<dbReference type="Gene3D" id="2.30.30.30">
    <property type="match status" value="1"/>
</dbReference>
<dbReference type="HAMAP" id="MF_01326_B">
    <property type="entry name" value="Ribosomal_uL24_B"/>
    <property type="match status" value="1"/>
</dbReference>
<dbReference type="InterPro" id="IPR005824">
    <property type="entry name" value="KOW"/>
</dbReference>
<dbReference type="InterPro" id="IPR014722">
    <property type="entry name" value="Rib_uL2_dom2"/>
</dbReference>
<dbReference type="InterPro" id="IPR003256">
    <property type="entry name" value="Ribosomal_uL24"/>
</dbReference>
<dbReference type="InterPro" id="IPR005825">
    <property type="entry name" value="Ribosomal_uL24_CS"/>
</dbReference>
<dbReference type="InterPro" id="IPR041988">
    <property type="entry name" value="Ribosomal_uL24_KOW"/>
</dbReference>
<dbReference type="InterPro" id="IPR008991">
    <property type="entry name" value="Translation_prot_SH3-like_sf"/>
</dbReference>
<dbReference type="NCBIfam" id="TIGR01079">
    <property type="entry name" value="rplX_bact"/>
    <property type="match status" value="1"/>
</dbReference>
<dbReference type="PANTHER" id="PTHR12903">
    <property type="entry name" value="MITOCHONDRIAL RIBOSOMAL PROTEIN L24"/>
    <property type="match status" value="1"/>
</dbReference>
<dbReference type="Pfam" id="PF00467">
    <property type="entry name" value="KOW"/>
    <property type="match status" value="1"/>
</dbReference>
<dbReference type="Pfam" id="PF17136">
    <property type="entry name" value="ribosomal_L24"/>
    <property type="match status" value="1"/>
</dbReference>
<dbReference type="SMART" id="SM00739">
    <property type="entry name" value="KOW"/>
    <property type="match status" value="1"/>
</dbReference>
<dbReference type="SUPFAM" id="SSF50104">
    <property type="entry name" value="Translation proteins SH3-like domain"/>
    <property type="match status" value="1"/>
</dbReference>
<dbReference type="PROSITE" id="PS01108">
    <property type="entry name" value="RIBOSOMAL_L24"/>
    <property type="match status" value="1"/>
</dbReference>